<name>VPB43_MYCTU</name>
<reference key="1">
    <citation type="journal article" date="1998" name="Nature">
        <title>Deciphering the biology of Mycobacterium tuberculosis from the complete genome sequence.</title>
        <authorList>
            <person name="Cole S.T."/>
            <person name="Brosch R."/>
            <person name="Parkhill J."/>
            <person name="Garnier T."/>
            <person name="Churcher C.M."/>
            <person name="Harris D.E."/>
            <person name="Gordon S.V."/>
            <person name="Eiglmeier K."/>
            <person name="Gas S."/>
            <person name="Barry C.E. III"/>
            <person name="Tekaia F."/>
            <person name="Badcock K."/>
            <person name="Basham D."/>
            <person name="Brown D."/>
            <person name="Chillingworth T."/>
            <person name="Connor R."/>
            <person name="Davies R.M."/>
            <person name="Devlin K."/>
            <person name="Feltwell T."/>
            <person name="Gentles S."/>
            <person name="Hamlin N."/>
            <person name="Holroyd S."/>
            <person name="Hornsby T."/>
            <person name="Jagels K."/>
            <person name="Krogh A."/>
            <person name="McLean J."/>
            <person name="Moule S."/>
            <person name="Murphy L.D."/>
            <person name="Oliver S."/>
            <person name="Osborne J."/>
            <person name="Quail M.A."/>
            <person name="Rajandream M.A."/>
            <person name="Rogers J."/>
            <person name="Rutter S."/>
            <person name="Seeger K."/>
            <person name="Skelton S."/>
            <person name="Squares S."/>
            <person name="Squares R."/>
            <person name="Sulston J.E."/>
            <person name="Taylor K."/>
            <person name="Whitehead S."/>
            <person name="Barrell B.G."/>
        </authorList>
    </citation>
    <scope>NUCLEOTIDE SEQUENCE [LARGE SCALE GENOMIC DNA]</scope>
    <source>
        <strain>ATCC 25618 / H37Rv</strain>
    </source>
</reference>
<reference key="2">
    <citation type="journal article" date="2009" name="PLoS Genet.">
        <title>Comprehensive functional analysis of Mycobacterium tuberculosis toxin-antitoxin systems: implications for pathogenesis, stress responses, and evolution.</title>
        <authorList>
            <person name="Ramage H.R."/>
            <person name="Connolly L.E."/>
            <person name="Cox J.S."/>
        </authorList>
    </citation>
    <scope>EXPRESSION IN M.SMEGMATIS</scope>
    <scope>FUNCTION AS AN ANTITOXIN</scope>
    <source>
        <strain>ATCC 35801 / TMC 107 / Erdman</strain>
    </source>
</reference>
<gene>
    <name type="primary">vapB43</name>
    <name type="ordered locus">Rv2871</name>
    <name type="ORF">MTCY274.02</name>
</gene>
<dbReference type="EMBL" id="AL123456">
    <property type="protein sequence ID" value="CCP45673.1"/>
    <property type="molecule type" value="Genomic_DNA"/>
</dbReference>
<dbReference type="PIR" id="B70923">
    <property type="entry name" value="B70923"/>
</dbReference>
<dbReference type="RefSeq" id="NP_217387.1">
    <property type="nucleotide sequence ID" value="NC_000962.3"/>
</dbReference>
<dbReference type="RefSeq" id="WP_003414620.1">
    <property type="nucleotide sequence ID" value="NZ_NVQJ01000006.1"/>
</dbReference>
<dbReference type="PDB" id="7VWO">
    <property type="method" value="X-ray"/>
    <property type="resolution" value="2.00 A"/>
    <property type="chains" value="D/H/J=49-76"/>
</dbReference>
<dbReference type="PDBsum" id="7VWO"/>
<dbReference type="SMR" id="P9WL41"/>
<dbReference type="STRING" id="83332.Rv2871"/>
<dbReference type="PaxDb" id="83332-Rv2871"/>
<dbReference type="DNASU" id="887468"/>
<dbReference type="GeneID" id="887468"/>
<dbReference type="KEGG" id="mtu:Rv2871"/>
<dbReference type="KEGG" id="mtv:RVBD_2871"/>
<dbReference type="TubercuList" id="Rv2871"/>
<dbReference type="eggNOG" id="COG3905">
    <property type="taxonomic scope" value="Bacteria"/>
</dbReference>
<dbReference type="InParanoid" id="P9WL41"/>
<dbReference type="OrthoDB" id="195896at2"/>
<dbReference type="PhylomeDB" id="P9WL41"/>
<dbReference type="Proteomes" id="UP000001584">
    <property type="component" value="Chromosome"/>
</dbReference>
<dbReference type="GO" id="GO:0005886">
    <property type="term" value="C:plasma membrane"/>
    <property type="evidence" value="ECO:0007005"/>
    <property type="project" value="MTBBASE"/>
</dbReference>
<dbReference type="GO" id="GO:0045927">
    <property type="term" value="P:positive regulation of growth"/>
    <property type="evidence" value="ECO:0000315"/>
    <property type="project" value="MTBBASE"/>
</dbReference>
<dbReference type="GO" id="GO:0006355">
    <property type="term" value="P:regulation of DNA-templated transcription"/>
    <property type="evidence" value="ECO:0007669"/>
    <property type="project" value="InterPro"/>
</dbReference>
<dbReference type="CDD" id="cd21631">
    <property type="entry name" value="RHH_CopG_NikR-like"/>
    <property type="match status" value="1"/>
</dbReference>
<dbReference type="InterPro" id="IPR002145">
    <property type="entry name" value="CopG"/>
</dbReference>
<dbReference type="InterPro" id="IPR010985">
    <property type="entry name" value="Ribbon_hlx_hlx"/>
</dbReference>
<dbReference type="Pfam" id="PF01402">
    <property type="entry name" value="RHH_1"/>
    <property type="match status" value="1"/>
</dbReference>
<dbReference type="SUPFAM" id="SSF47598">
    <property type="entry name" value="Ribbon-helix-helix"/>
    <property type="match status" value="1"/>
</dbReference>
<accession>P9WL41</accession>
<accession>L0TDL7</accession>
<accession>P0A5G9</accession>
<accession>Q10799</accession>
<proteinExistence type="evidence at protein level"/>
<comment type="function">
    <text evidence="2">Antitoxin component of a type II toxin-antitoxin (TA) system. Upon expression in M.smegmatis neutralizes the effect of cognate toxin VapC43.</text>
</comment>
<evidence type="ECO:0000256" key="1">
    <source>
        <dbReference type="SAM" id="MobiDB-lite"/>
    </source>
</evidence>
<evidence type="ECO:0000269" key="2">
    <source>
    </source>
</evidence>
<evidence type="ECO:0007829" key="3">
    <source>
        <dbReference type="PDB" id="7VWO"/>
    </source>
</evidence>
<sequence length="85" mass="9045">MRTTIRIDDELYREVKAKAARSGRTVAAVLEDAVRRGLNPPKPQAAGRYRVQPSGKGGLRPGVDLSSNAALAEAMNDGVSVDAVR</sequence>
<organism>
    <name type="scientific">Mycobacterium tuberculosis (strain ATCC 25618 / H37Rv)</name>
    <dbReference type="NCBI Taxonomy" id="83332"/>
    <lineage>
        <taxon>Bacteria</taxon>
        <taxon>Bacillati</taxon>
        <taxon>Actinomycetota</taxon>
        <taxon>Actinomycetes</taxon>
        <taxon>Mycobacteriales</taxon>
        <taxon>Mycobacteriaceae</taxon>
        <taxon>Mycobacterium</taxon>
        <taxon>Mycobacterium tuberculosis complex</taxon>
    </lineage>
</organism>
<protein>
    <recommendedName>
        <fullName>Antitoxin VapB43</fullName>
    </recommendedName>
</protein>
<feature type="chain" id="PRO_0000104085" description="Antitoxin VapB43">
    <location>
        <begin position="1"/>
        <end position="85"/>
    </location>
</feature>
<feature type="region of interest" description="Disordered" evidence="1">
    <location>
        <begin position="37"/>
        <end position="60"/>
    </location>
</feature>
<feature type="helix" evidence="3">
    <location>
        <begin position="68"/>
        <end position="75"/>
    </location>
</feature>
<keyword id="KW-0002">3D-structure</keyword>
<keyword id="KW-1185">Reference proteome</keyword>
<keyword id="KW-1277">Toxin-antitoxin system</keyword>